<accession>B7N7E4</accession>
<keyword id="KW-0378">Hydrolase</keyword>
<feature type="chain" id="PRO_1000131787" description="N(4)-acetylcytidine amidohydrolase">
    <location>
        <begin position="1"/>
        <end position="103"/>
    </location>
</feature>
<feature type="domain" description="ASCH" evidence="1">
    <location>
        <begin position="6"/>
        <end position="101"/>
    </location>
</feature>
<feature type="active site" description="Proton acceptor" evidence="2">
    <location>
        <position position="21"/>
    </location>
</feature>
<feature type="active site" description="Nucleophile" evidence="2">
    <location>
        <position position="24"/>
    </location>
</feature>
<feature type="active site" description="Proton donor" evidence="2">
    <location>
        <position position="74"/>
    </location>
</feature>
<gene>
    <name type="primary">yqfB</name>
    <name type="ordered locus">ECUMN_3242</name>
</gene>
<dbReference type="EC" id="3.5.1.135" evidence="2"/>
<dbReference type="EMBL" id="CU928163">
    <property type="protein sequence ID" value="CAR14406.1"/>
    <property type="molecule type" value="Genomic_DNA"/>
</dbReference>
<dbReference type="RefSeq" id="WP_001182957.1">
    <property type="nucleotide sequence ID" value="NC_011751.1"/>
</dbReference>
<dbReference type="RefSeq" id="YP_002413925.1">
    <property type="nucleotide sequence ID" value="NC_011751.1"/>
</dbReference>
<dbReference type="SMR" id="B7N7E4"/>
<dbReference type="STRING" id="585056.ECUMN_3242"/>
<dbReference type="GeneID" id="75173001"/>
<dbReference type="KEGG" id="eum:ECUMN_3242"/>
<dbReference type="PATRIC" id="fig|585056.7.peg.3419"/>
<dbReference type="HOGENOM" id="CLU_152586_0_0_6"/>
<dbReference type="Proteomes" id="UP000007097">
    <property type="component" value="Chromosome"/>
</dbReference>
<dbReference type="GO" id="GO:0005829">
    <property type="term" value="C:cytosol"/>
    <property type="evidence" value="ECO:0007669"/>
    <property type="project" value="TreeGrafter"/>
</dbReference>
<dbReference type="GO" id="GO:0016813">
    <property type="term" value="F:hydrolase activity, acting on carbon-nitrogen (but not peptide) bonds, in linear amidines"/>
    <property type="evidence" value="ECO:0007669"/>
    <property type="project" value="UniProtKB-UniRule"/>
</dbReference>
<dbReference type="GO" id="GO:0106251">
    <property type="term" value="F:N4-acetylcytidine amidohydrolase activity"/>
    <property type="evidence" value="ECO:0007669"/>
    <property type="project" value="RHEA"/>
</dbReference>
<dbReference type="CDD" id="cd06552">
    <property type="entry name" value="ASCH_yqfb_like"/>
    <property type="match status" value="1"/>
</dbReference>
<dbReference type="FunFam" id="2.30.130.30:FF:000001">
    <property type="entry name" value="UPF0267 protein YqfB"/>
    <property type="match status" value="1"/>
</dbReference>
<dbReference type="Gene3D" id="2.30.130.30">
    <property type="entry name" value="Hypothetical protein"/>
    <property type="match status" value="1"/>
</dbReference>
<dbReference type="HAMAP" id="MF_00684">
    <property type="entry name" value="ac4C_amidohydr"/>
    <property type="match status" value="1"/>
</dbReference>
<dbReference type="InterPro" id="IPR008314">
    <property type="entry name" value="AC4CH"/>
</dbReference>
<dbReference type="InterPro" id="IPR007374">
    <property type="entry name" value="ASCH_domain"/>
</dbReference>
<dbReference type="InterPro" id="IPR015947">
    <property type="entry name" value="PUA-like_sf"/>
</dbReference>
<dbReference type="NCBIfam" id="NF003443">
    <property type="entry name" value="PRK04980.1"/>
    <property type="match status" value="1"/>
</dbReference>
<dbReference type="PANTHER" id="PTHR38088">
    <property type="entry name" value="UCP029143 FAMILY PROTEIN"/>
    <property type="match status" value="1"/>
</dbReference>
<dbReference type="PANTHER" id="PTHR38088:SF2">
    <property type="entry name" value="UCP029143 FAMILY PROTEIN"/>
    <property type="match status" value="1"/>
</dbReference>
<dbReference type="Pfam" id="PF04266">
    <property type="entry name" value="ASCH"/>
    <property type="match status" value="1"/>
</dbReference>
<dbReference type="PIRSF" id="PIRSF029143">
    <property type="entry name" value="UCP029143"/>
    <property type="match status" value="1"/>
</dbReference>
<dbReference type="SMART" id="SM01022">
    <property type="entry name" value="ASCH"/>
    <property type="match status" value="1"/>
</dbReference>
<dbReference type="SUPFAM" id="SSF88697">
    <property type="entry name" value="PUA domain-like"/>
    <property type="match status" value="1"/>
</dbReference>
<name>AC4CH_ECOLU</name>
<proteinExistence type="inferred from homology"/>
<sequence length="103" mass="11905">MQPNDITFFQRFQDDILAGRKTITIRDESESHFKTGDVLRVGRFEDDGYFCTIEVTATSTVTLDTLTEKHAEQENMTLTELKKVIADIYPGQTQFYVIEFKCL</sequence>
<protein>
    <recommendedName>
        <fullName evidence="2">N(4)-acetylcytidine amidohydrolase</fullName>
        <shortName evidence="2">ac4C amidohydrolase</shortName>
        <ecNumber evidence="2">3.5.1.135</ecNumber>
    </recommendedName>
</protein>
<comment type="function">
    <text evidence="2">Catalyzes the hydrolysis of N(4)-acetylcytidine (ac4C).</text>
</comment>
<comment type="catalytic activity">
    <reaction evidence="2">
        <text>N(4)-acetylcytidine + H2O = cytidine + acetate + H(+)</text>
        <dbReference type="Rhea" id="RHEA:62932"/>
        <dbReference type="ChEBI" id="CHEBI:15377"/>
        <dbReference type="ChEBI" id="CHEBI:15378"/>
        <dbReference type="ChEBI" id="CHEBI:17562"/>
        <dbReference type="ChEBI" id="CHEBI:30089"/>
        <dbReference type="ChEBI" id="CHEBI:70989"/>
        <dbReference type="EC" id="3.5.1.135"/>
    </reaction>
</comment>
<comment type="catalytic activity">
    <reaction evidence="2">
        <text>N(4)-acetyl-2'-deoxycytidine + H2O = 2'-deoxycytidine + acetate + H(+)</text>
        <dbReference type="Rhea" id="RHEA:62936"/>
        <dbReference type="ChEBI" id="CHEBI:15377"/>
        <dbReference type="ChEBI" id="CHEBI:15378"/>
        <dbReference type="ChEBI" id="CHEBI:15698"/>
        <dbReference type="ChEBI" id="CHEBI:30089"/>
        <dbReference type="ChEBI" id="CHEBI:146133"/>
        <dbReference type="EC" id="3.5.1.135"/>
    </reaction>
</comment>
<comment type="catalytic activity">
    <reaction evidence="2">
        <text>N(4)-acetylcytosine + H2O = cytosine + acetate + H(+)</text>
        <dbReference type="Rhea" id="RHEA:62940"/>
        <dbReference type="ChEBI" id="CHEBI:15377"/>
        <dbReference type="ChEBI" id="CHEBI:15378"/>
        <dbReference type="ChEBI" id="CHEBI:16040"/>
        <dbReference type="ChEBI" id="CHEBI:30089"/>
        <dbReference type="ChEBI" id="CHEBI:146134"/>
        <dbReference type="EC" id="3.5.1.135"/>
    </reaction>
</comment>
<comment type="similarity">
    <text evidence="2">Belongs to the N(4)-acetylcytidine amidohydrolase family.</text>
</comment>
<organism>
    <name type="scientific">Escherichia coli O17:K52:H18 (strain UMN026 / ExPEC)</name>
    <dbReference type="NCBI Taxonomy" id="585056"/>
    <lineage>
        <taxon>Bacteria</taxon>
        <taxon>Pseudomonadati</taxon>
        <taxon>Pseudomonadota</taxon>
        <taxon>Gammaproteobacteria</taxon>
        <taxon>Enterobacterales</taxon>
        <taxon>Enterobacteriaceae</taxon>
        <taxon>Escherichia</taxon>
    </lineage>
</organism>
<reference key="1">
    <citation type="journal article" date="2009" name="PLoS Genet.">
        <title>Organised genome dynamics in the Escherichia coli species results in highly diverse adaptive paths.</title>
        <authorList>
            <person name="Touchon M."/>
            <person name="Hoede C."/>
            <person name="Tenaillon O."/>
            <person name="Barbe V."/>
            <person name="Baeriswyl S."/>
            <person name="Bidet P."/>
            <person name="Bingen E."/>
            <person name="Bonacorsi S."/>
            <person name="Bouchier C."/>
            <person name="Bouvet O."/>
            <person name="Calteau A."/>
            <person name="Chiapello H."/>
            <person name="Clermont O."/>
            <person name="Cruveiller S."/>
            <person name="Danchin A."/>
            <person name="Diard M."/>
            <person name="Dossat C."/>
            <person name="Karoui M.E."/>
            <person name="Frapy E."/>
            <person name="Garry L."/>
            <person name="Ghigo J.M."/>
            <person name="Gilles A.M."/>
            <person name="Johnson J."/>
            <person name="Le Bouguenec C."/>
            <person name="Lescat M."/>
            <person name="Mangenot S."/>
            <person name="Martinez-Jehanne V."/>
            <person name="Matic I."/>
            <person name="Nassif X."/>
            <person name="Oztas S."/>
            <person name="Petit M.A."/>
            <person name="Pichon C."/>
            <person name="Rouy Z."/>
            <person name="Ruf C.S."/>
            <person name="Schneider D."/>
            <person name="Tourret J."/>
            <person name="Vacherie B."/>
            <person name="Vallenet D."/>
            <person name="Medigue C."/>
            <person name="Rocha E.P.C."/>
            <person name="Denamur E."/>
        </authorList>
    </citation>
    <scope>NUCLEOTIDE SEQUENCE [LARGE SCALE GENOMIC DNA]</scope>
    <source>
        <strain>UMN026 / ExPEC</strain>
    </source>
</reference>
<evidence type="ECO:0000255" key="1"/>
<evidence type="ECO:0000255" key="2">
    <source>
        <dbReference type="HAMAP-Rule" id="MF_00684"/>
    </source>
</evidence>